<comment type="function">
    <text evidence="4 6 7 8 9 10 13 15">Required for the cuticle, root suberin and pollen coat development by controlling cutin and maybe wax transport to the extracellular matrix (PubMed:20035035, PubMed:24112720). Involved in developmental plasticity and stress responses. Together with ABCG9 and ABCG14, required for vascular development by regulating lipid/sterol homeostasis (PubMed:24112720). May be a transporter of lignin precursors during tracheary element differentiation (PubMed:28921082).</text>
</comment>
<comment type="subunit">
    <text evidence="11 13">Homodimer (PubMed:20870961, PubMed:24112720). Forms heterodimers with ABCG9, ABCG12 and ABCG14 in epidermal cells (PubMed:20870961, PubMed:24112720).</text>
</comment>
<comment type="subcellular location">
    <subcellularLocation>
        <location evidence="6 7 8 9 11 13">Cell membrane</location>
        <topology evidence="6 7 8 9">Multi-pass membrane protein</topology>
    </subcellularLocation>
    <text evidence="10 11">Localized in a polar manner in the epidermis side facing the extracellular matrix (cuticle) and in the endosperm tissue of the developing seed (PubMed:20035035). Trafficking to the plasma membrane is independent of ABCG12 (PubMed:20870961).</text>
</comment>
<comment type="tissue specificity">
    <text evidence="5 6 7 9 10 12 13 14">Expressed in seedlings, roots, stems, leaves, flowers, and siliques, mostly in epidermis, trichomes, vasculatures and developing tissues (PubMed:14730060, PubMed:17727615, PubMed:17951461, PubMed:17989085, PubMed:20035035, PubMed:24112720). Follows an uniparental maternal expression in the seed, thus being the product of a maternally expressed imprinted gene (PubMed:21838868). Accumulates in the phloem (PubMed:24112720). Transcripts seem to be transported from shoots to roots (PubMed:27247031).</text>
</comment>
<comment type="developmental stage">
    <text evidence="6 7 10 13 15">First observed in seed coat and the endosperm (PubMed:20035035). Displays a polar localization in the embryo protoderm (PubMed:20035035). During embryo development, expressed in the radical tip. In seedlings, localized in the cotyledons, root tip, and young leaves. As secondary root tips emerge, expressed in the pericycle during the initial cell divisions. In leaves, mostly detected in the expanding basal portion, trichomes and stomatal cells. Present in rosette leaves vascular system and epidermis (PubMed:24112720). In roots of mature plants, mainly expressed in lateral root primordia and developing lateral roots (PubMed:24112720). Accumulates in buds and open flowers, mainly in the petal epidermis and the vasculature (PubMed:20035035). In the inflorescence, found in all floral organs, predominantly in the anthers, styles, and young siliques, particularly in young seeds (PubMed:20035035). Upon anthesis and later, progressively restricted to the carpel. Also observed in phloem cells of the flower stem, and in the cortical cells and interfascicular fibers (PubMed:24112720). Accumulates during tracheary element differentiation (PubMed:28921082).</text>
</comment>
<comment type="induction">
    <text evidence="5 7 9">By light, NaCl, abscisic acid (ABA), wounding, and glucose stresses. Repressed by H(2)O(2) and cytokinin.</text>
</comment>
<comment type="disruption phenotype">
    <text evidence="4 6 7 8 9 10 11 13">Bushy phenotype (PubMed:24112720). Abnormal cuticle and pollen grain shapes, reduced levels of wax and cutin monomers, unusual lipidic cytoplasmic inclusions in epidermal cells, inter-organ postgenital fusions, and altered morphology of trichomes and pavement cells (PubMed:20035035, PubMed:24112720). Altered petal and silique morphology, fusion of seeds, and changes in levels of cutin monomers in flowers and siliques associated with the suppression of the expression of a large number of cuticle-associated genes (PubMed:20035035). Altered root suberin composition, as well as root expression of suberin biosynthetic genes (PubMed:20035035). Highly susceptibility to salt and reduced root branching. Excess in sterol (e.g. campesterol) composition (PubMed:24112720). Vascular patterning defects in cotyledons and the floral stem, with a stronger phenotype in plant missing also ABCG9 and ABCG14 (PubMed:24112720). Both single and double mutants abcg11 abcg12 exhibit ABCG12-containing membrane inclusions protruded into the vacuole and contiguous with the endoplasmic reticulum (PubMed:20870961).</text>
</comment>
<comment type="similarity">
    <text evidence="23">Belongs to the ABC transporter superfamily. ABCG family. Eye pigment precursor importer (TC 3.A.1.204) subfamily.</text>
</comment>
<comment type="sequence caution" evidence="23">
    <conflict type="erroneous gene model prediction">
        <sequence resource="EMBL-CDS" id="AAF97264"/>
    </conflict>
</comment>
<organism>
    <name type="scientific">Arabidopsis thaliana</name>
    <name type="common">Mouse-ear cress</name>
    <dbReference type="NCBI Taxonomy" id="3702"/>
    <lineage>
        <taxon>Eukaryota</taxon>
        <taxon>Viridiplantae</taxon>
        <taxon>Streptophyta</taxon>
        <taxon>Embryophyta</taxon>
        <taxon>Tracheophyta</taxon>
        <taxon>Spermatophyta</taxon>
        <taxon>Magnoliopsida</taxon>
        <taxon>eudicotyledons</taxon>
        <taxon>Gunneridae</taxon>
        <taxon>Pentapetalae</taxon>
        <taxon>rosids</taxon>
        <taxon>malvids</taxon>
        <taxon>Brassicales</taxon>
        <taxon>Brassicaceae</taxon>
        <taxon>Camelineae</taxon>
        <taxon>Arabidopsis</taxon>
    </lineage>
</organism>
<reference key="1">
    <citation type="journal article" date="2000" name="Nature">
        <title>Sequence and analysis of chromosome 1 of the plant Arabidopsis thaliana.</title>
        <authorList>
            <person name="Theologis A."/>
            <person name="Ecker J.R."/>
            <person name="Palm C.J."/>
            <person name="Federspiel N.A."/>
            <person name="Kaul S."/>
            <person name="White O."/>
            <person name="Alonso J."/>
            <person name="Altafi H."/>
            <person name="Araujo R."/>
            <person name="Bowman C.L."/>
            <person name="Brooks S.Y."/>
            <person name="Buehler E."/>
            <person name="Chan A."/>
            <person name="Chao Q."/>
            <person name="Chen H."/>
            <person name="Cheuk R.F."/>
            <person name="Chin C.W."/>
            <person name="Chung M.K."/>
            <person name="Conn L."/>
            <person name="Conway A.B."/>
            <person name="Conway A.R."/>
            <person name="Creasy T.H."/>
            <person name="Dewar K."/>
            <person name="Dunn P."/>
            <person name="Etgu P."/>
            <person name="Feldblyum T.V."/>
            <person name="Feng J.-D."/>
            <person name="Fong B."/>
            <person name="Fujii C.Y."/>
            <person name="Gill J.E."/>
            <person name="Goldsmith A.D."/>
            <person name="Haas B."/>
            <person name="Hansen N.F."/>
            <person name="Hughes B."/>
            <person name="Huizar L."/>
            <person name="Hunter J.L."/>
            <person name="Jenkins J."/>
            <person name="Johnson-Hopson C."/>
            <person name="Khan S."/>
            <person name="Khaykin E."/>
            <person name="Kim C.J."/>
            <person name="Koo H.L."/>
            <person name="Kremenetskaia I."/>
            <person name="Kurtz D.B."/>
            <person name="Kwan A."/>
            <person name="Lam B."/>
            <person name="Langin-Hooper S."/>
            <person name="Lee A."/>
            <person name="Lee J.M."/>
            <person name="Lenz C.A."/>
            <person name="Li J.H."/>
            <person name="Li Y.-P."/>
            <person name="Lin X."/>
            <person name="Liu S.X."/>
            <person name="Liu Z.A."/>
            <person name="Luros J.S."/>
            <person name="Maiti R."/>
            <person name="Marziali A."/>
            <person name="Militscher J."/>
            <person name="Miranda M."/>
            <person name="Nguyen M."/>
            <person name="Nierman W.C."/>
            <person name="Osborne B.I."/>
            <person name="Pai G."/>
            <person name="Peterson J."/>
            <person name="Pham P.K."/>
            <person name="Rizzo M."/>
            <person name="Rooney T."/>
            <person name="Rowley D."/>
            <person name="Sakano H."/>
            <person name="Salzberg S.L."/>
            <person name="Schwartz J.R."/>
            <person name="Shinn P."/>
            <person name="Southwick A.M."/>
            <person name="Sun H."/>
            <person name="Tallon L.J."/>
            <person name="Tambunga G."/>
            <person name="Toriumi M.J."/>
            <person name="Town C.D."/>
            <person name="Utterback T."/>
            <person name="Van Aken S."/>
            <person name="Vaysberg M."/>
            <person name="Vysotskaia V.S."/>
            <person name="Walker M."/>
            <person name="Wu D."/>
            <person name="Yu G."/>
            <person name="Fraser C.M."/>
            <person name="Venter J.C."/>
            <person name="Davis R.W."/>
        </authorList>
    </citation>
    <scope>NUCLEOTIDE SEQUENCE [LARGE SCALE GENOMIC DNA]</scope>
    <source>
        <strain>cv. Columbia</strain>
    </source>
</reference>
<reference key="2">
    <citation type="journal article" date="2017" name="Plant J.">
        <title>Araport11: a complete reannotation of the Arabidopsis thaliana reference genome.</title>
        <authorList>
            <person name="Cheng C.Y."/>
            <person name="Krishnakumar V."/>
            <person name="Chan A.P."/>
            <person name="Thibaud-Nissen F."/>
            <person name="Schobel S."/>
            <person name="Town C.D."/>
        </authorList>
    </citation>
    <scope>GENOME REANNOTATION</scope>
    <source>
        <strain>cv. Columbia</strain>
    </source>
</reference>
<reference key="3">
    <citation type="journal article" date="2003" name="Science">
        <title>Empirical analysis of transcriptional activity in the Arabidopsis genome.</title>
        <authorList>
            <person name="Yamada K."/>
            <person name="Lim J."/>
            <person name="Dale J.M."/>
            <person name="Chen H."/>
            <person name="Shinn P."/>
            <person name="Palm C.J."/>
            <person name="Southwick A.M."/>
            <person name="Wu H.C."/>
            <person name="Kim C.J."/>
            <person name="Nguyen M."/>
            <person name="Pham P.K."/>
            <person name="Cheuk R.F."/>
            <person name="Karlin-Newmann G."/>
            <person name="Liu S.X."/>
            <person name="Lam B."/>
            <person name="Sakano H."/>
            <person name="Wu T."/>
            <person name="Yu G."/>
            <person name="Miranda M."/>
            <person name="Quach H.L."/>
            <person name="Tripp M."/>
            <person name="Chang C.H."/>
            <person name="Lee J.M."/>
            <person name="Toriumi M.J."/>
            <person name="Chan M.M."/>
            <person name="Tang C.C."/>
            <person name="Onodera C.S."/>
            <person name="Deng J.M."/>
            <person name="Akiyama K."/>
            <person name="Ansari Y."/>
            <person name="Arakawa T."/>
            <person name="Banh J."/>
            <person name="Banno F."/>
            <person name="Bowser L."/>
            <person name="Brooks S.Y."/>
            <person name="Carninci P."/>
            <person name="Chao Q."/>
            <person name="Choy N."/>
            <person name="Enju A."/>
            <person name="Goldsmith A.D."/>
            <person name="Gurjal M."/>
            <person name="Hansen N.F."/>
            <person name="Hayashizaki Y."/>
            <person name="Johnson-Hopson C."/>
            <person name="Hsuan V.W."/>
            <person name="Iida K."/>
            <person name="Karnes M."/>
            <person name="Khan S."/>
            <person name="Koesema E."/>
            <person name="Ishida J."/>
            <person name="Jiang P.X."/>
            <person name="Jones T."/>
            <person name="Kawai J."/>
            <person name="Kamiya A."/>
            <person name="Meyers C."/>
            <person name="Nakajima M."/>
            <person name="Narusaka M."/>
            <person name="Seki M."/>
            <person name="Sakurai T."/>
            <person name="Satou M."/>
            <person name="Tamse R."/>
            <person name="Vaysberg M."/>
            <person name="Wallender E.K."/>
            <person name="Wong C."/>
            <person name="Yamamura Y."/>
            <person name="Yuan S."/>
            <person name="Shinozaki K."/>
            <person name="Davis R.W."/>
            <person name="Theologis A."/>
            <person name="Ecker J.R."/>
        </authorList>
    </citation>
    <scope>NUCLEOTIDE SEQUENCE [LARGE SCALE MRNA]</scope>
    <source>
        <strain>cv. Columbia</strain>
    </source>
</reference>
<reference key="4">
    <citation type="journal article" date="2001" name="J. Biol. Chem.">
        <title>The Arabidopsis thaliana ABC protein superfamily, a complete inventory.</title>
        <authorList>
            <person name="Sanchez-Fernandez R."/>
            <person name="Davies T.G."/>
            <person name="Coleman J.O."/>
            <person name="Rea P.A."/>
        </authorList>
    </citation>
    <scope>GENE FAMILY</scope>
    <scope>NOMENCLATURE</scope>
</reference>
<reference key="5">
    <citation type="journal article" date="2004" name="Plant Physiol.">
        <title>Gene trapping with firefly luciferase in Arabidopsis. Tagging of stress-responsive genes.</title>
        <authorList>
            <person name="Alvarado M.C."/>
            <person name="Zsigmond L.M."/>
            <person name="Kovacs I."/>
            <person name="Cseploe A."/>
            <person name="Koncz C."/>
            <person name="Szabados L.M."/>
        </authorList>
    </citation>
    <scope>TISSUE SPECIFICITY</scope>
    <scope>INDUCTION</scope>
</reference>
<reference key="6">
    <citation type="journal article" date="2004" name="Plant J.">
        <title>A new method for rapid visualization of defects in leaf cuticle reveals five intrinsic patterns of surface defects in Arabidopsis.</title>
        <authorList>
            <person name="Tanaka T."/>
            <person name="Tanaka H."/>
            <person name="Machida C."/>
            <person name="Watanabe M."/>
            <person name="Machida Y."/>
        </authorList>
    </citation>
    <scope>FUNCTION</scope>
    <scope>DISRUPTION PHENOTYPE</scope>
</reference>
<reference key="7">
    <citation type="journal article" date="2007" name="Plant Cell Physiol.">
        <title>Cytological and biochemical analysis of COF1, an Arabidopsis mutant of an ABC transporter gene.</title>
        <authorList>
            <person name="Ukitsu H."/>
            <person name="Kuromori T."/>
            <person name="Toyooka K."/>
            <person name="Goto Y."/>
            <person name="Matsuoka K."/>
            <person name="Sakuradani E."/>
            <person name="Shimizu S."/>
            <person name="Kamiya A."/>
            <person name="Imura Y."/>
            <person name="Yuguchi M."/>
            <person name="Wada T."/>
            <person name="Hirayama T."/>
            <person name="Shinozaki K."/>
        </authorList>
    </citation>
    <scope>FUNCTION</scope>
    <scope>SUBCELLULAR LOCATION</scope>
    <scope>DISRUPTION PHENOTYPE</scope>
</reference>
<reference key="8">
    <citation type="journal article" date="2007" name="Plant Cell Physiol.">
        <title>An ABC transporter gene of Arabidopsis thaliana, AtWBC11, is involved in cuticle development and prevention of organ fusion.</title>
        <authorList>
            <person name="Luo B."/>
            <person name="Xue X.-Y."/>
            <person name="Hu W.-L."/>
            <person name="Wang L.-J."/>
            <person name="Chen X.-Y."/>
        </authorList>
    </citation>
    <scope>FUNCTION</scope>
    <scope>DISRUPTION PHENOTYPE</scope>
    <scope>INDUCTION BY LIGHT AND ABA</scope>
    <scope>REPRESSION BY CYTOKININ</scope>
    <scope>SUBCELLULAR LOCATION</scope>
    <scope>TISSUE SPECIFICITY</scope>
</reference>
<reference key="9">
    <citation type="journal article" date="2007" name="Plant J.">
        <title>Characterization of Arabidopsis ABCG11/WBC11, an ATP binding cassette (ABC) transporter that is required for cuticular lipid secretion.</title>
        <authorList>
            <person name="Bird D."/>
            <person name="Beisson F."/>
            <person name="Brigham A."/>
            <person name="Shin J."/>
            <person name="Greer S."/>
            <person name="Jetter R."/>
            <person name="Kunst L."/>
            <person name="Wu X."/>
            <person name="Yephremov A."/>
            <person name="Samuels L."/>
        </authorList>
    </citation>
    <scope>FUNCTION</scope>
    <scope>DISRUPTION PHENOTYPE</scope>
    <scope>TISSUE SPECIFICITY</scope>
    <scope>DEVELOPMENTAL STAGE</scope>
    <scope>SUBCELLULAR LOCATION</scope>
    <source>
        <strain>cv. Columbia</strain>
    </source>
</reference>
<reference key="10">
    <citation type="journal article" date="2007" name="Plant Physiol.">
        <title>The Arabidopsis DESPERADO/AtWBC11 transporter is required for cutin and wax secretion.</title>
        <authorList>
            <person name="Panikashvili D."/>
            <person name="Savaldi-Goldstein S."/>
            <person name="Mandel T."/>
            <person name="Yifhar T."/>
            <person name="Franke R.B."/>
            <person name="Hoefer R."/>
            <person name="Schreiber L."/>
            <person name="Chory J."/>
            <person name="Aharoni A."/>
        </authorList>
    </citation>
    <scope>FUNCTION</scope>
    <scope>DISRUPTION PHENOTYPE</scope>
    <scope>INDUCTION BY SALT; ABSCISIC ACID AND WOUNDING</scope>
    <scope>TISSUE SPECIFICITY</scope>
    <scope>DEVELOPMENTAL STAGE</scope>
    <scope>SUBCELLULAR LOCATION</scope>
</reference>
<reference key="11">
    <citation type="journal article" date="2008" name="Trends Plant Sci.">
        <title>Plant ABC proteins - a unified nomenclature and updated inventory.</title>
        <authorList>
            <person name="Verrier P.J."/>
            <person name="Bird D."/>
            <person name="Burla B."/>
            <person name="Dassa E."/>
            <person name="Forestier C."/>
            <person name="Geisler M."/>
            <person name="Klein M."/>
            <person name="Kolukisaoglu H.U."/>
            <person name="Lee Y."/>
            <person name="Martinoia E."/>
            <person name="Murphy A."/>
            <person name="Rea P.A."/>
            <person name="Samuels L."/>
            <person name="Schulz B."/>
            <person name="Spalding E.J."/>
            <person name="Yazaki K."/>
            <person name="Theodoulou F.L."/>
        </authorList>
    </citation>
    <scope>GENE FAMILY</scope>
    <scope>NOMENCLATURE</scope>
</reference>
<reference key="12">
    <citation type="journal article" date="2009" name="Plant Physiol.">
        <title>Large-scale Arabidopsis phosphoproteome profiling reveals novel chloroplast kinase substrates and phosphorylation networks.</title>
        <authorList>
            <person name="Reiland S."/>
            <person name="Messerli G."/>
            <person name="Baerenfaller K."/>
            <person name="Gerrits B."/>
            <person name="Endler A."/>
            <person name="Grossmann J."/>
            <person name="Gruissem W."/>
            <person name="Baginsky S."/>
        </authorList>
    </citation>
    <scope>PHOSPHORYLATION [LARGE SCALE ANALYSIS] AT SER-688</scope>
    <scope>IDENTIFICATION BY MASS SPECTROMETRY [LARGE SCALE ANALYSIS]</scope>
</reference>
<reference key="13">
    <citation type="journal article" date="2010" name="Mol. Plant">
        <title>The Arabidopsis DSO/ABCG11 transporter affects cutin metabolism in reproductive organs and suberin in roots.</title>
        <authorList>
            <person name="Panikashvili D."/>
            <person name="Shi J.X."/>
            <person name="Bocobza S."/>
            <person name="Franke R.B."/>
            <person name="Schreiber L."/>
            <person name="Aharoni A."/>
        </authorList>
    </citation>
    <scope>FUNCTION</scope>
    <scope>DISRUPTION PHENOTYPE</scope>
    <scope>TISSUE SPECIFICITY</scope>
    <scope>DEVELOPMENTAL STAGE</scope>
    <scope>SUBCELLULAR LOCATION</scope>
</reference>
<reference key="14">
    <citation type="journal article" date="2010" name="Plant Cell">
        <title>Arabidopsis ABCG transporters, which are required for export of diverse cuticular lipids, dimerize in different combinations.</title>
        <authorList>
            <person name="McFarlane H.E."/>
            <person name="Shin J.J.H."/>
            <person name="Bird D.A."/>
            <person name="Samuels A.L."/>
        </authorList>
    </citation>
    <scope>DISRUPTION PHENOTYPE</scope>
    <scope>SUBCELLULAR LOCATION</scope>
    <scope>INTERACTION WITH ABCG12</scope>
    <scope>SUBUNIT</scope>
    <source>
        <strain>cv. Columbia</strain>
    </source>
</reference>
<reference key="15">
    <citation type="journal article" date="2011" name="BMC Plant Biol.">
        <title>Identification of imprinted genes subject to parent-of-origin specific expression in Arabidopsis thaliana seeds.</title>
        <authorList>
            <person name="McKeown P.C."/>
            <person name="Laouielle-Duprat S."/>
            <person name="Prins P."/>
            <person name="Wolff P."/>
            <person name="Schmid M.W."/>
            <person name="Donoghue M.T."/>
            <person name="Fort A."/>
            <person name="Duszynska D."/>
            <person name="Comte A."/>
            <person name="Lao N.T."/>
            <person name="Wennblom T.J."/>
            <person name="Smant G."/>
            <person name="Koehler C."/>
            <person name="Grossniklaus U."/>
            <person name="Spillane C."/>
        </authorList>
    </citation>
    <scope>MATERNAL IMPRINTING</scope>
</reference>
<reference key="16">
    <citation type="journal article" date="2013" name="Plant J.">
        <title>ABCG9, ABCG11 and ABCG14 ABC transporters are required for vascular development in Arabidopsis.</title>
        <authorList>
            <person name="Le Hir R."/>
            <person name="Sorin C."/>
            <person name="Chakraborti D."/>
            <person name="Moritz T."/>
            <person name="Schaller H."/>
            <person name="Tellier F."/>
            <person name="Robert S."/>
            <person name="Morin H."/>
            <person name="Bako L."/>
            <person name="Bellini C."/>
        </authorList>
    </citation>
    <scope>FUNCTION</scope>
    <scope>DISRUPTION PHENOTYPE</scope>
    <scope>SUBCELLULAR LOCATION</scope>
    <scope>TISSUE SPECIFICITY</scope>
    <scope>DEVELOPMENTAL STAGE</scope>
    <scope>SUBUNIT</scope>
    <scope>INTERACTION WITH ABCG9 AND ABCG14</scope>
    <source>
        <strain>cv. Columbia</strain>
    </source>
</reference>
<reference key="17">
    <citation type="journal article" date="2015" name="Nat. Plants">
        <title>Endogenous Arabidopsis messenger RNAs transported to distant tissues.</title>
        <authorList>
            <person name="Thieme C.J."/>
            <person name="Rojas-Triana M."/>
            <person name="Stecyk E."/>
            <person name="Schudoma C."/>
            <person name="Zhang W."/>
            <person name="Yang L."/>
            <person name="Minambres M."/>
            <person name="Walther D."/>
            <person name="Schulze W.X."/>
            <person name="Paz-Ares J."/>
            <person name="Scheible W.R."/>
            <person name="Kragler F."/>
        </authorList>
    </citation>
    <scope>TISSUE SPECIFICITY</scope>
</reference>
<reference key="18">
    <citation type="journal article" date="2018" name="J. Plant Res.">
        <title>Expression analysis of transporter genes for screening candidate monolignol transporters using Arabidopsis thaliana cell suspensions during tracheary element differentiation.</title>
        <authorList>
            <person name="Takeuchi M."/>
            <person name="Kegasa T."/>
            <person name="Watanabe A."/>
            <person name="Tamura M."/>
            <person name="Tsutsumi Y."/>
        </authorList>
    </citation>
    <scope>FUNCTION</scope>
    <scope>DEVELOPMENTAL STAGE</scope>
</reference>
<accession>Q8RXN0</accession>
<accession>Q9LMU4</accession>
<protein>
    <recommendedName>
        <fullName evidence="18 22">ABC transporter G family member 11</fullName>
        <shortName evidence="18 22">ABC transporter ABCG.11</shortName>
        <shortName evidence="18 22">AtABCG11</shortName>
    </recommendedName>
    <alternativeName>
        <fullName evidence="20">Protein CUTICULAR DEFECT AND ORGAN FUSION 1</fullName>
    </alternativeName>
    <alternativeName>
        <fullName evidence="19">Protein DESPERADO</fullName>
    </alternativeName>
    <alternativeName>
        <fullName evidence="17">Protein PERMEABLE LEAVES 1</fullName>
    </alternativeName>
    <alternativeName>
        <fullName evidence="16 21">White-brown complex homolog protein 11</fullName>
        <shortName evidence="16 21">AtWBC11</shortName>
    </alternativeName>
</protein>
<feature type="chain" id="PRO_0000240683" description="ABC transporter G family member 11">
    <location>
        <begin position="1"/>
        <end position="703"/>
    </location>
</feature>
<feature type="transmembrane region" description="Helical" evidence="1">
    <location>
        <begin position="406"/>
        <end position="426"/>
    </location>
</feature>
<feature type="transmembrane region" description="Helical" evidence="1">
    <location>
        <begin position="436"/>
        <end position="456"/>
    </location>
</feature>
<feature type="transmembrane region" description="Helical" evidence="1">
    <location>
        <begin position="485"/>
        <end position="505"/>
    </location>
</feature>
<feature type="transmembrane region" description="Helical" evidence="1">
    <location>
        <begin position="513"/>
        <end position="533"/>
    </location>
</feature>
<feature type="transmembrane region" description="Helical" evidence="1">
    <location>
        <begin position="540"/>
        <end position="560"/>
    </location>
</feature>
<feature type="transmembrane region" description="Helical" evidence="1">
    <location>
        <begin position="628"/>
        <end position="648"/>
    </location>
</feature>
<feature type="domain" description="ABC transporter" evidence="2">
    <location>
        <begin position="50"/>
        <end position="293"/>
    </location>
</feature>
<feature type="domain" description="ABC transmembrane type-2" evidence="1">
    <location>
        <begin position="382"/>
        <end position="594"/>
    </location>
</feature>
<feature type="binding site" evidence="2">
    <location>
        <begin position="87"/>
        <end position="94"/>
    </location>
    <ligand>
        <name>ATP</name>
        <dbReference type="ChEBI" id="CHEBI:30616"/>
    </ligand>
</feature>
<feature type="modified residue" description="Phosphoserine" evidence="26">
    <location>
        <position position="688"/>
    </location>
</feature>
<feature type="glycosylation site" description="N-linked (GlcNAc...) asparagine" evidence="3">
    <location>
        <position position="394"/>
    </location>
</feature>
<feature type="glycosylation site" description="N-linked (GlcNAc...) asparagine" evidence="3">
    <location>
        <position position="671"/>
    </location>
</feature>
<feature type="glycosylation site" description="N-linked (GlcNAc...) asparagine" evidence="3">
    <location>
        <position position="675"/>
    </location>
</feature>
<proteinExistence type="evidence at protein level"/>
<keyword id="KW-0067">ATP-binding</keyword>
<keyword id="KW-1003">Cell membrane</keyword>
<keyword id="KW-0325">Glycoprotein</keyword>
<keyword id="KW-0472">Membrane</keyword>
<keyword id="KW-0547">Nucleotide-binding</keyword>
<keyword id="KW-0597">Phosphoprotein</keyword>
<keyword id="KW-1185">Reference proteome</keyword>
<keyword id="KW-0812">Transmembrane</keyword>
<keyword id="KW-1133">Transmembrane helix</keyword>
<keyword id="KW-0813">Transport</keyword>
<dbReference type="EMBL" id="AC034106">
    <property type="protein sequence ID" value="AAF97264.1"/>
    <property type="status" value="ALT_SEQ"/>
    <property type="molecule type" value="Genomic_DNA"/>
</dbReference>
<dbReference type="EMBL" id="CP002684">
    <property type="protein sequence ID" value="AEE29642.1"/>
    <property type="molecule type" value="Genomic_DNA"/>
</dbReference>
<dbReference type="EMBL" id="AY080792">
    <property type="protein sequence ID" value="AAL87274.1"/>
    <property type="molecule type" value="mRNA"/>
</dbReference>
<dbReference type="EMBL" id="AY150457">
    <property type="protein sequence ID" value="AAN12898.1"/>
    <property type="molecule type" value="mRNA"/>
</dbReference>
<dbReference type="PIR" id="E86313">
    <property type="entry name" value="E86313"/>
</dbReference>
<dbReference type="RefSeq" id="NP_173226.2">
    <property type="nucleotide sequence ID" value="NM_101647.5"/>
</dbReference>
<dbReference type="SMR" id="Q8RXN0"/>
<dbReference type="BioGRID" id="23602">
    <property type="interactions" value="18"/>
</dbReference>
<dbReference type="FunCoup" id="Q8RXN0">
    <property type="interactions" value="133"/>
</dbReference>
<dbReference type="IntAct" id="Q8RXN0">
    <property type="interactions" value="13"/>
</dbReference>
<dbReference type="STRING" id="3702.Q8RXN0"/>
<dbReference type="TCDB" id="3.A.1.204.45">
    <property type="family name" value="the atp-binding cassette (abc) superfamily"/>
</dbReference>
<dbReference type="TCDB" id="3.A.1.204.8">
    <property type="family name" value="the atp-binding cassette (abc) superfamily"/>
</dbReference>
<dbReference type="GlyCosmos" id="Q8RXN0">
    <property type="glycosylation" value="3 sites, No reported glycans"/>
</dbReference>
<dbReference type="GlyGen" id="Q8RXN0">
    <property type="glycosylation" value="3 sites"/>
</dbReference>
<dbReference type="iPTMnet" id="Q8RXN0"/>
<dbReference type="PaxDb" id="3702-AT1G17840.1"/>
<dbReference type="ProteomicsDB" id="244576"/>
<dbReference type="EnsemblPlants" id="AT1G17840.1">
    <property type="protein sequence ID" value="AT1G17840.1"/>
    <property type="gene ID" value="AT1G17840"/>
</dbReference>
<dbReference type="GeneID" id="838363"/>
<dbReference type="Gramene" id="AT1G17840.1">
    <property type="protein sequence ID" value="AT1G17840.1"/>
    <property type="gene ID" value="AT1G17840"/>
</dbReference>
<dbReference type="KEGG" id="ath:AT1G17840"/>
<dbReference type="Araport" id="AT1G17840"/>
<dbReference type="TAIR" id="AT1G17840">
    <property type="gene designation" value="ABCG11"/>
</dbReference>
<dbReference type="eggNOG" id="KOG0061">
    <property type="taxonomic scope" value="Eukaryota"/>
</dbReference>
<dbReference type="HOGENOM" id="CLU_000604_57_7_1"/>
<dbReference type="InParanoid" id="Q8RXN0"/>
<dbReference type="OMA" id="FWYYTFY"/>
<dbReference type="OrthoDB" id="66620at2759"/>
<dbReference type="PhylomeDB" id="Q8RXN0"/>
<dbReference type="PRO" id="PR:Q8RXN0"/>
<dbReference type="Proteomes" id="UP000006548">
    <property type="component" value="Chromosome 1"/>
</dbReference>
<dbReference type="ExpressionAtlas" id="Q8RXN0">
    <property type="expression patterns" value="baseline and differential"/>
</dbReference>
<dbReference type="GO" id="GO:0009897">
    <property type="term" value="C:external side of plasma membrane"/>
    <property type="evidence" value="ECO:0000314"/>
    <property type="project" value="TAIR"/>
</dbReference>
<dbReference type="GO" id="GO:0005634">
    <property type="term" value="C:nucleus"/>
    <property type="evidence" value="ECO:0007005"/>
    <property type="project" value="TAIR"/>
</dbReference>
<dbReference type="GO" id="GO:0005886">
    <property type="term" value="C:plasma membrane"/>
    <property type="evidence" value="ECO:0000314"/>
    <property type="project" value="UniProtKB"/>
</dbReference>
<dbReference type="GO" id="GO:0140359">
    <property type="term" value="F:ABC-type transporter activity"/>
    <property type="evidence" value="ECO:0007669"/>
    <property type="project" value="InterPro"/>
</dbReference>
<dbReference type="GO" id="GO:0005524">
    <property type="term" value="F:ATP binding"/>
    <property type="evidence" value="ECO:0007669"/>
    <property type="project" value="UniProtKB-KW"/>
</dbReference>
<dbReference type="GO" id="GO:0016887">
    <property type="term" value="F:ATP hydrolysis activity"/>
    <property type="evidence" value="ECO:0007669"/>
    <property type="project" value="InterPro"/>
</dbReference>
<dbReference type="GO" id="GO:0015562">
    <property type="term" value="F:efflux transmembrane transporter activity"/>
    <property type="evidence" value="ECO:0000315"/>
    <property type="project" value="UniProtKB"/>
</dbReference>
<dbReference type="GO" id="GO:0015245">
    <property type="term" value="F:fatty acid transmembrane transporter activity"/>
    <property type="evidence" value="ECO:0000315"/>
    <property type="project" value="UniProtKB"/>
</dbReference>
<dbReference type="GO" id="GO:0042803">
    <property type="term" value="F:protein homodimerization activity"/>
    <property type="evidence" value="ECO:0000314"/>
    <property type="project" value="UniProtKB"/>
</dbReference>
<dbReference type="GO" id="GO:0010588">
    <property type="term" value="P:cotyledon vascular tissue pattern formation"/>
    <property type="evidence" value="ECO:0000315"/>
    <property type="project" value="TAIR"/>
</dbReference>
<dbReference type="GO" id="GO:0042335">
    <property type="term" value="P:cuticle development"/>
    <property type="evidence" value="ECO:0000315"/>
    <property type="project" value="UniProtKB"/>
</dbReference>
<dbReference type="GO" id="GO:0080051">
    <property type="term" value="P:cutin transport"/>
    <property type="evidence" value="ECO:0000315"/>
    <property type="project" value="UniProtKB"/>
</dbReference>
<dbReference type="GO" id="GO:0015908">
    <property type="term" value="P:fatty acid transport"/>
    <property type="evidence" value="ECO:0000304"/>
    <property type="project" value="TAIR"/>
</dbReference>
<dbReference type="GO" id="GO:0009737">
    <property type="term" value="P:response to abscisic acid"/>
    <property type="evidence" value="ECO:0000314"/>
    <property type="project" value="UniProtKB"/>
</dbReference>
<dbReference type="GO" id="GO:0009651">
    <property type="term" value="P:response to salt stress"/>
    <property type="evidence" value="ECO:0000314"/>
    <property type="project" value="UniProtKB"/>
</dbReference>
<dbReference type="GO" id="GO:0009611">
    <property type="term" value="P:response to wounding"/>
    <property type="evidence" value="ECO:0000314"/>
    <property type="project" value="UniProtKB"/>
</dbReference>
<dbReference type="GO" id="GO:0010222">
    <property type="term" value="P:stem vascular tissue pattern formation"/>
    <property type="evidence" value="ECO:0000316"/>
    <property type="project" value="TAIR"/>
</dbReference>
<dbReference type="GO" id="GO:0010345">
    <property type="term" value="P:suberin biosynthetic process"/>
    <property type="evidence" value="ECO:0000315"/>
    <property type="project" value="UniProtKB"/>
</dbReference>
<dbReference type="GO" id="GO:0055085">
    <property type="term" value="P:transmembrane transport"/>
    <property type="evidence" value="ECO:0000315"/>
    <property type="project" value="UniProtKB"/>
</dbReference>
<dbReference type="CDD" id="cd03213">
    <property type="entry name" value="ABCG_EPDR"/>
    <property type="match status" value="1"/>
</dbReference>
<dbReference type="FunFam" id="3.40.50.300:FF:000504">
    <property type="entry name" value="ABC transporter G family member 11"/>
    <property type="match status" value="1"/>
</dbReference>
<dbReference type="Gene3D" id="3.40.50.300">
    <property type="entry name" value="P-loop containing nucleotide triphosphate hydrolases"/>
    <property type="match status" value="1"/>
</dbReference>
<dbReference type="InterPro" id="IPR003593">
    <property type="entry name" value="AAA+_ATPase"/>
</dbReference>
<dbReference type="InterPro" id="IPR013525">
    <property type="entry name" value="ABC2_TM"/>
</dbReference>
<dbReference type="InterPro" id="IPR003439">
    <property type="entry name" value="ABC_transporter-like_ATP-bd"/>
</dbReference>
<dbReference type="InterPro" id="IPR017871">
    <property type="entry name" value="ABC_transporter-like_CS"/>
</dbReference>
<dbReference type="InterPro" id="IPR043926">
    <property type="entry name" value="ABCG_dom"/>
</dbReference>
<dbReference type="InterPro" id="IPR027417">
    <property type="entry name" value="P-loop_NTPase"/>
</dbReference>
<dbReference type="InterPro" id="IPR052215">
    <property type="entry name" value="Plant_ABCG"/>
</dbReference>
<dbReference type="PANTHER" id="PTHR48042">
    <property type="entry name" value="ABC TRANSPORTER G FAMILY MEMBER 11"/>
    <property type="match status" value="1"/>
</dbReference>
<dbReference type="PANTHER" id="PTHR48042:SF11">
    <property type="entry name" value="ABC TRANSPORTER G FAMILY MEMBER 11"/>
    <property type="match status" value="1"/>
</dbReference>
<dbReference type="Pfam" id="PF01061">
    <property type="entry name" value="ABC2_membrane"/>
    <property type="match status" value="1"/>
</dbReference>
<dbReference type="Pfam" id="PF19055">
    <property type="entry name" value="ABC2_membrane_7"/>
    <property type="match status" value="1"/>
</dbReference>
<dbReference type="Pfam" id="PF00005">
    <property type="entry name" value="ABC_tran"/>
    <property type="match status" value="1"/>
</dbReference>
<dbReference type="SMART" id="SM00382">
    <property type="entry name" value="AAA"/>
    <property type="match status" value="1"/>
</dbReference>
<dbReference type="SUPFAM" id="SSF52540">
    <property type="entry name" value="P-loop containing nucleoside triphosphate hydrolases"/>
    <property type="match status" value="1"/>
</dbReference>
<dbReference type="PROSITE" id="PS00211">
    <property type="entry name" value="ABC_TRANSPORTER_1"/>
    <property type="match status" value="1"/>
</dbReference>
<dbReference type="PROSITE" id="PS50893">
    <property type="entry name" value="ABC_TRANSPORTER_2"/>
    <property type="match status" value="1"/>
</dbReference>
<gene>
    <name evidence="18 22" type="primary">ABCG11</name>
    <name evidence="20" type="synonym">COF1</name>
    <name evidence="19" type="synonym">DSO</name>
    <name evidence="17" type="synonym">PEL1</name>
    <name evidence="16 21" type="synonym">WBC11</name>
    <name evidence="24" type="ordered locus">At1g17840</name>
    <name evidence="25" type="ORF">F2H15.7</name>
</gene>
<evidence type="ECO:0000255" key="1"/>
<evidence type="ECO:0000255" key="2">
    <source>
        <dbReference type="PROSITE-ProRule" id="PRU00434"/>
    </source>
</evidence>
<evidence type="ECO:0000255" key="3">
    <source>
        <dbReference type="PROSITE-ProRule" id="PRU00498"/>
    </source>
</evidence>
<evidence type="ECO:0000269" key="4">
    <source>
    </source>
</evidence>
<evidence type="ECO:0000269" key="5">
    <source>
    </source>
</evidence>
<evidence type="ECO:0000269" key="6">
    <source>
    </source>
</evidence>
<evidence type="ECO:0000269" key="7">
    <source>
    </source>
</evidence>
<evidence type="ECO:0000269" key="8">
    <source>
    </source>
</evidence>
<evidence type="ECO:0000269" key="9">
    <source>
    </source>
</evidence>
<evidence type="ECO:0000269" key="10">
    <source>
    </source>
</evidence>
<evidence type="ECO:0000269" key="11">
    <source>
    </source>
</evidence>
<evidence type="ECO:0000269" key="12">
    <source>
    </source>
</evidence>
<evidence type="ECO:0000269" key="13">
    <source>
    </source>
</evidence>
<evidence type="ECO:0000269" key="14">
    <source>
    </source>
</evidence>
<evidence type="ECO:0000269" key="15">
    <source>
    </source>
</evidence>
<evidence type="ECO:0000303" key="16">
    <source>
    </source>
</evidence>
<evidence type="ECO:0000303" key="17">
    <source>
    </source>
</evidence>
<evidence type="ECO:0000303" key="18">
    <source>
    </source>
</evidence>
<evidence type="ECO:0000303" key="19">
    <source>
    </source>
</evidence>
<evidence type="ECO:0000303" key="20">
    <source>
    </source>
</evidence>
<evidence type="ECO:0000303" key="21">
    <source>
    </source>
</evidence>
<evidence type="ECO:0000303" key="22">
    <source>
    </source>
</evidence>
<evidence type="ECO:0000305" key="23"/>
<evidence type="ECO:0000312" key="24">
    <source>
        <dbReference type="Araport" id="AT1G17840"/>
    </source>
</evidence>
<evidence type="ECO:0000312" key="25">
    <source>
        <dbReference type="EMBL" id="AAF97264.1"/>
    </source>
</evidence>
<evidence type="ECO:0007744" key="26">
    <source>
    </source>
</evidence>
<name>AB11G_ARATH</name>
<sequence>MEIEASRQQTTVPVSVGGGNFPVGGLSPLSEAIWREKAPTEFVGDVSARLTWQDLTVMVTMGDGETQNVLEGLTGYAEPGSLTALMGPSGSGKSTMLDALASRLAANAFLSGTVLLNGRKTKLSFGTAAYVTQDDNLIGTLTVRETIWYSARVRLPDKMLRSEKRALVERTIIEMGLQDCADTVIGNWHLRGISGGEKRRVSIALEILMRPRLLFLDEPTSGLDSASAFFVTQTLRALSRDGRTVIASIHQPSSEVFELFDRLYLLSGGKTVYFGQASDAYEFFAQAGFPCPALRNPSDHFLRCINSDFDKVRATLKGSMKLRFEASDDPLEKITTAEAIRLLVDYYHTSDYYYTAKAKVEEISQFKGTILDSGGSQASFLLQTYTLTKRSFINMSRDFGYYWLRLLIYILVTVCIGTIYLNVGTSYSAILARGSCASFVFGFVTFMSIGGFPSFVEDMKVFQRERLNGHYGVAAFVIANTLSATPFLIMITFISGTICYFMVGLHPGFTHYLFFVLCLYASVTVVESLMMAIASIVPNFLMGIIIGAGIQGIFMLVSGFFRLPNDIPKPFWRYPMSYISFHFWALQGQYQNDLRGLTFDSQGSAFKIPGEYVLENVFQIDLHRSKWINLSVILSMIIIYRIIFFIMIKTNEDVTPWVRGYIARRRMKQKNGTQNTTVAPDGLTQSPSLRNYIATRTDGARRW</sequence>